<keyword id="KW-0025">Alternative splicing</keyword>
<keyword id="KW-0256">Endoplasmic reticulum</keyword>
<keyword id="KW-0333">Golgi apparatus</keyword>
<keyword id="KW-0472">Membrane</keyword>
<keyword id="KW-0653">Protein transport</keyword>
<keyword id="KW-1267">Proteomics identification</keyword>
<keyword id="KW-1185">Reference proteome</keyword>
<keyword id="KW-0812">Transmembrane</keyword>
<keyword id="KW-1133">Transmembrane helix</keyword>
<keyword id="KW-0813">Transport</keyword>
<protein>
    <recommendedName>
        <fullName evidence="14">Surfeit locus protein 4</fullName>
    </recommendedName>
</protein>
<comment type="function">
    <text evidence="4 6 7 8 9">Endoplasmic reticulum cargo receptor that mediates the export of lipoproteins by recruiting cargos into COPII vesicles to facilitate their secretion (PubMed:29643117, PubMed:30251625, PubMed:33186557). Acts as a cargo receptor for lipoproteins bearing both APOB and APOA1, thereby regulating lipoprotein delivery and the maintenance of lipid homeostasis (PubMed:29643117, PubMed:33186557). Synergizes with the GTPase SAR1B to mediate transport of circulating lipoproteins (PubMed:33186557). Promotes the secretion of PCSK9 (PubMed:30251625). Also mediates the efficient secretion of erythropoietin (EPO) (PubMed:32989016). May also play a role in the maintenance of the architecture of the endoplasmic reticulum-Golgi intermediate compartment and of the Golgi (PubMed:18287528).</text>
</comment>
<comment type="subunit">
    <text evidence="1 4 5 9 10">Found in a complex composed at least of SURF4, TMED2 and TMED10 (PubMed:18287528). May interact with LMAN1 (PubMed:18287528). Interacts with ZFYVE27 and with KIF5A in a ZFYVE27-dependent manner (By similarity). Interacts with STING1 (PubMed:29251827). Interacts with SAR1B (PubMed:33186557). Interacts with TMEM41B (PubMed:34015269).</text>
</comment>
<comment type="interaction">
    <interactant intactId="EBI-1044848">
        <id>O15260</id>
    </interactant>
    <interactant intactId="EBI-1057738">
        <id>P49257</id>
        <label>LMAN1</label>
    </interactant>
    <organismsDiffer>false</organismsDiffer>
    <experiments>3</experiments>
</comment>
<comment type="interaction">
    <interactant intactId="EBI-1044848">
        <id>O15260</id>
    </interactant>
    <interactant intactId="EBI-2800345">
        <id>Q86WV6</id>
        <label>STING1</label>
    </interactant>
    <organismsDiffer>false</organismsDiffer>
    <experiments>3</experiments>
</comment>
<comment type="interaction">
    <interactant intactId="EBI-1044848">
        <id>O15260</id>
    </interactant>
    <interactant intactId="EBI-6116986">
        <id>Q8VCW4</id>
        <label>Unc93b1</label>
    </interactant>
    <organismsDiffer>true</organismsDiffer>
    <experiments>2</experiments>
</comment>
<comment type="subcellular location">
    <subcellularLocation>
        <location evidence="3 4 7 9">Endoplasmic reticulum membrane</location>
        <topology evidence="2">Multi-pass membrane protein</topology>
    </subcellularLocation>
    <subcellularLocation>
        <location evidence="4">Endoplasmic reticulum-Golgi intermediate compartment membrane</location>
        <topology evidence="2">Multi-pass membrane protein</topology>
    </subcellularLocation>
    <subcellularLocation>
        <location evidence="4 7 9">Golgi apparatus membrane</location>
        <topology evidence="2">Multi-pass membrane protein</topology>
    </subcellularLocation>
    <text evidence="4 9">Active at endoplasmic reticulum exit sites (ERES) where it is incorporated together with its lipoprotein cargos into COPII-coated vesicles. From the Golgi it is recycled back to the endoplasmic reticulum.</text>
</comment>
<comment type="alternative products">
    <event type="alternative splicing"/>
    <isoform>
        <id>O15260-1</id>
        <name>1</name>
        <sequence type="displayed"/>
    </isoform>
    <isoform>
        <id>O15260-2</id>
        <name>2</name>
        <sequence type="described" ref="VSP_006307 VSP_006308"/>
    </isoform>
    <isoform>
        <id>O15260-3</id>
        <name>3</name>
        <sequence type="described" ref="VSP_054686 VSP_054687"/>
    </isoform>
</comment>
<comment type="domain">
    <text evidence="4">The di-lysine motif confers endoplasmic reticulum localization for type I membrane proteins.</text>
</comment>
<comment type="similarity">
    <text evidence="15">Belongs to the SURF4 family.</text>
</comment>
<gene>
    <name evidence="13 16" type="primary">SURF4</name>
    <name evidence="14" type="synonym">SURF-4</name>
</gene>
<evidence type="ECO:0000250" key="1">
    <source>
        <dbReference type="UniProtKB" id="Q64310"/>
    </source>
</evidence>
<evidence type="ECO:0000255" key="2"/>
<evidence type="ECO:0000269" key="3">
    <source>
    </source>
</evidence>
<evidence type="ECO:0000269" key="4">
    <source>
    </source>
</evidence>
<evidence type="ECO:0000269" key="5">
    <source>
    </source>
</evidence>
<evidence type="ECO:0000269" key="6">
    <source>
    </source>
</evidence>
<evidence type="ECO:0000269" key="7">
    <source>
    </source>
</evidence>
<evidence type="ECO:0000269" key="8">
    <source>
    </source>
</evidence>
<evidence type="ECO:0000269" key="9">
    <source>
    </source>
</evidence>
<evidence type="ECO:0000269" key="10">
    <source>
    </source>
</evidence>
<evidence type="ECO:0000303" key="11">
    <source>
    </source>
</evidence>
<evidence type="ECO:0000303" key="12">
    <source>
    </source>
</evidence>
<evidence type="ECO:0000303" key="13">
    <source>
    </source>
</evidence>
<evidence type="ECO:0000303" key="14">
    <source>
    </source>
</evidence>
<evidence type="ECO:0000305" key="15"/>
<evidence type="ECO:0000312" key="16">
    <source>
        <dbReference type="HGNC" id="HGNC:11476"/>
    </source>
</evidence>
<evidence type="ECO:0007744" key="17">
    <source>
    </source>
</evidence>
<feature type="initiator methionine" description="Removed" evidence="17">
    <location>
        <position position="1"/>
    </location>
</feature>
<feature type="chain" id="PRO_0000127664" description="Surfeit locus protein 4">
    <location>
        <begin position="2"/>
        <end position="269"/>
    </location>
</feature>
<feature type="transmembrane region" description="Helical" evidence="2">
    <location>
        <begin position="64"/>
        <end position="84"/>
    </location>
</feature>
<feature type="transmembrane region" description="Helical" evidence="2">
    <location>
        <begin position="92"/>
        <end position="112"/>
    </location>
</feature>
<feature type="transmembrane region" description="Helical" evidence="2">
    <location>
        <begin position="179"/>
        <end position="199"/>
    </location>
</feature>
<feature type="transmembrane region" description="Helical" evidence="2">
    <location>
        <begin position="203"/>
        <end position="223"/>
    </location>
</feature>
<feature type="transmembrane region" description="Helical" evidence="2">
    <location>
        <begin position="239"/>
        <end position="259"/>
    </location>
</feature>
<feature type="short sequence motif" description="Di-lysine motif" evidence="4">
    <location>
        <begin position="266"/>
        <end position="269"/>
    </location>
</feature>
<feature type="splice variant" id="VSP_054686" description="In isoform 3." evidence="12">
    <original>NLALGGGLL</original>
    <variation>LSRTSWAQL</variation>
    <location>
        <begin position="120"/>
        <end position="128"/>
    </location>
</feature>
<feature type="splice variant" id="VSP_054687" description="In isoform 3." evidence="12">
    <location>
        <begin position="129"/>
        <end position="269"/>
    </location>
</feature>
<feature type="splice variant" id="VSP_006307" description="In isoform 2." evidence="11">
    <original>MQL</original>
    <variation>LPG</variation>
    <location>
        <begin position="157"/>
        <end position="159"/>
    </location>
</feature>
<feature type="splice variant" id="VSP_006308" description="In isoform 2." evidence="11">
    <location>
        <begin position="160"/>
        <end position="269"/>
    </location>
</feature>
<feature type="mutagenesis site" description="Targeted to the Golgi." evidence="4 9">
    <original>KKK</original>
    <variation>SSS</variation>
    <variation>AAA</variation>
    <location>
        <begin position="265"/>
        <end position="267"/>
    </location>
</feature>
<feature type="sequence conflict" description="In Ref. 6; CAA75099." evidence="15" ref="6">
    <original>L</original>
    <variation>V</variation>
    <location>
        <position position="130"/>
    </location>
</feature>
<proteinExistence type="evidence at protein level"/>
<organism>
    <name type="scientific">Homo sapiens</name>
    <name type="common">Human</name>
    <dbReference type="NCBI Taxonomy" id="9606"/>
    <lineage>
        <taxon>Eukaryota</taxon>
        <taxon>Metazoa</taxon>
        <taxon>Chordata</taxon>
        <taxon>Craniata</taxon>
        <taxon>Vertebrata</taxon>
        <taxon>Euteleostomi</taxon>
        <taxon>Mammalia</taxon>
        <taxon>Eutheria</taxon>
        <taxon>Euarchontoglires</taxon>
        <taxon>Primates</taxon>
        <taxon>Haplorrhini</taxon>
        <taxon>Catarrhini</taxon>
        <taxon>Hominidae</taxon>
        <taxon>Homo</taxon>
    </lineage>
</organism>
<accession>O15260</accession>
<accession>B7Z6A4</accession>
<accession>O60923</accession>
<accession>Q5T8U6</accession>
<accession>Q9UNZ0</accession>
<accession>Q9UNZ1</accession>
<name>SURF4_HUMAN</name>
<dbReference type="EMBL" id="AF078866">
    <property type="protein sequence ID" value="AAD44498.1"/>
    <property type="molecule type" value="mRNA"/>
</dbReference>
<dbReference type="EMBL" id="AF078867">
    <property type="protein sequence ID" value="AAD44499.1"/>
    <property type="molecule type" value="mRNA"/>
</dbReference>
<dbReference type="EMBL" id="AK300004">
    <property type="protein sequence ID" value="BAH13190.1"/>
    <property type="molecule type" value="mRNA"/>
</dbReference>
<dbReference type="EMBL" id="AK315488">
    <property type="protein sequence ID" value="BAG37872.1"/>
    <property type="molecule type" value="mRNA"/>
</dbReference>
<dbReference type="EMBL" id="AL158826">
    <property type="protein sequence ID" value="CAI12840.1"/>
    <property type="molecule type" value="Genomic_DNA"/>
</dbReference>
<dbReference type="EMBL" id="CH471090">
    <property type="protein sequence ID" value="EAW88071.1"/>
    <property type="molecule type" value="Genomic_DNA"/>
</dbReference>
<dbReference type="EMBL" id="CH471090">
    <property type="protein sequence ID" value="EAW88074.1"/>
    <property type="molecule type" value="Genomic_DNA"/>
</dbReference>
<dbReference type="EMBL" id="BC018741">
    <property type="protein sequence ID" value="AAH18741.1"/>
    <property type="molecule type" value="mRNA"/>
</dbReference>
<dbReference type="EMBL" id="BC111023">
    <property type="protein sequence ID" value="AAI11024.1"/>
    <property type="molecule type" value="mRNA"/>
</dbReference>
<dbReference type="EMBL" id="Y14820">
    <property type="protein sequence ID" value="CAA75099.1"/>
    <property type="molecule type" value="mRNA"/>
</dbReference>
<dbReference type="EMBL" id="Y17214">
    <property type="protein sequence ID" value="CAA76692.1"/>
    <property type="molecule type" value="Genomic_DNA"/>
</dbReference>
<dbReference type="CCDS" id="CCDS65177.1">
    <molecule id="O15260-3"/>
</dbReference>
<dbReference type="CCDS" id="CCDS65178.1">
    <molecule id="O15260-2"/>
</dbReference>
<dbReference type="CCDS" id="CCDS6968.1">
    <molecule id="O15260-1"/>
</dbReference>
<dbReference type="RefSeq" id="NP_001267718.1">
    <molecule id="O15260-2"/>
    <property type="nucleotide sequence ID" value="NM_001280789.2"/>
</dbReference>
<dbReference type="RefSeq" id="NP_001267721.1">
    <molecule id="O15260-3"/>
    <property type="nucleotide sequence ID" value="NM_001280792.2"/>
</dbReference>
<dbReference type="RefSeq" id="NP_149351.1">
    <molecule id="O15260-1"/>
    <property type="nucleotide sequence ID" value="NM_033161.4"/>
</dbReference>
<dbReference type="BioGRID" id="112703">
    <property type="interactions" value="267"/>
</dbReference>
<dbReference type="CORUM" id="O15260"/>
<dbReference type="FunCoup" id="O15260">
    <property type="interactions" value="2719"/>
</dbReference>
<dbReference type="IntAct" id="O15260">
    <property type="interactions" value="121"/>
</dbReference>
<dbReference type="MINT" id="O15260"/>
<dbReference type="STRING" id="9606.ENSP00000361057"/>
<dbReference type="TCDB" id="9.B.214.1.2">
    <property type="family name" value="the er to golgi transport factor (er/g-tf) family"/>
</dbReference>
<dbReference type="CarbonylDB" id="O15260"/>
<dbReference type="GlyGen" id="O15260">
    <property type="glycosylation" value="1 site, 1 O-linked glycan (1 site)"/>
</dbReference>
<dbReference type="iPTMnet" id="O15260"/>
<dbReference type="MetOSite" id="O15260"/>
<dbReference type="PhosphoSitePlus" id="O15260"/>
<dbReference type="SwissPalm" id="O15260"/>
<dbReference type="BioMuta" id="SURF4"/>
<dbReference type="jPOST" id="O15260"/>
<dbReference type="MassIVE" id="O15260"/>
<dbReference type="PaxDb" id="9606-ENSP00000361057"/>
<dbReference type="PeptideAtlas" id="O15260"/>
<dbReference type="ProteomicsDB" id="48549">
    <molecule id="O15260-1"/>
</dbReference>
<dbReference type="ProteomicsDB" id="48550">
    <molecule id="O15260-2"/>
</dbReference>
<dbReference type="ProteomicsDB" id="6763"/>
<dbReference type="Pumba" id="O15260"/>
<dbReference type="TopDownProteomics" id="O15260-1">
    <molecule id="O15260-1"/>
</dbReference>
<dbReference type="Antibodypedia" id="31854">
    <property type="antibodies" value="131 antibodies from 20 providers"/>
</dbReference>
<dbReference type="DNASU" id="6836"/>
<dbReference type="Ensembl" id="ENST00000371989.8">
    <molecule id="O15260-1"/>
    <property type="protein sequence ID" value="ENSP00000361057.3"/>
    <property type="gene ID" value="ENSG00000148248.14"/>
</dbReference>
<dbReference type="Ensembl" id="ENST00000485435.6">
    <molecule id="O15260-2"/>
    <property type="protein sequence ID" value="ENSP00000419853.2"/>
    <property type="gene ID" value="ENSG00000148248.14"/>
</dbReference>
<dbReference type="Ensembl" id="ENST00000545297.5">
    <molecule id="O15260-3"/>
    <property type="protein sequence ID" value="ENSP00000446061.1"/>
    <property type="gene ID" value="ENSG00000148248.14"/>
</dbReference>
<dbReference type="Ensembl" id="ENST00000626303.2">
    <molecule id="O15260-2"/>
    <property type="protein sequence ID" value="ENSP00000487537.1"/>
    <property type="gene ID" value="ENSG00000280951.3"/>
</dbReference>
<dbReference type="Ensembl" id="ENST00000629119.2">
    <molecule id="O15260-3"/>
    <property type="protein sequence ID" value="ENSP00000486869.1"/>
    <property type="gene ID" value="ENSG00000280951.3"/>
</dbReference>
<dbReference type="Ensembl" id="ENST00000629578.3">
    <molecule id="O15260-1"/>
    <property type="protein sequence ID" value="ENSP00000486049.1"/>
    <property type="gene ID" value="ENSG00000280951.3"/>
</dbReference>
<dbReference type="GeneID" id="6836"/>
<dbReference type="KEGG" id="hsa:6836"/>
<dbReference type="MANE-Select" id="ENST00000371989.8">
    <property type="protein sequence ID" value="ENSP00000361057.3"/>
    <property type="RefSeq nucleotide sequence ID" value="NM_033161.4"/>
    <property type="RefSeq protein sequence ID" value="NP_149351.1"/>
</dbReference>
<dbReference type="UCSC" id="uc004cdj.5">
    <molecule id="O15260-1"/>
    <property type="organism name" value="human"/>
</dbReference>
<dbReference type="AGR" id="HGNC:11476"/>
<dbReference type="CTD" id="6836"/>
<dbReference type="DisGeNET" id="6836"/>
<dbReference type="GeneCards" id="SURF4"/>
<dbReference type="HGNC" id="HGNC:11476">
    <property type="gene designation" value="SURF4"/>
</dbReference>
<dbReference type="HPA" id="ENSG00000148248">
    <property type="expression patterns" value="Low tissue specificity"/>
</dbReference>
<dbReference type="MIM" id="185660">
    <property type="type" value="gene"/>
</dbReference>
<dbReference type="neXtProt" id="NX_O15260"/>
<dbReference type="OpenTargets" id="ENSG00000148248"/>
<dbReference type="PharmGKB" id="PA36261"/>
<dbReference type="VEuPathDB" id="HostDB:ENSG00000148248"/>
<dbReference type="eggNOG" id="KOG3998">
    <property type="taxonomic scope" value="Eukaryota"/>
</dbReference>
<dbReference type="GeneTree" id="ENSGT00530000064123"/>
<dbReference type="HOGENOM" id="CLU_056195_0_0_1"/>
<dbReference type="InParanoid" id="O15260"/>
<dbReference type="OMA" id="SSPRQYM"/>
<dbReference type="OrthoDB" id="7859621at2759"/>
<dbReference type="PAN-GO" id="O15260">
    <property type="GO annotations" value="3 GO annotations based on evolutionary models"/>
</dbReference>
<dbReference type="PhylomeDB" id="O15260"/>
<dbReference type="TreeFam" id="TF300001"/>
<dbReference type="PathwayCommons" id="O15260"/>
<dbReference type="Reactome" id="R-HSA-6798695">
    <property type="pathway name" value="Neutrophil degranulation"/>
</dbReference>
<dbReference type="Reactome" id="R-HSA-6811434">
    <property type="pathway name" value="COPI-dependent Golgi-to-ER retrograde traffic"/>
</dbReference>
<dbReference type="SignaLink" id="O15260"/>
<dbReference type="BioGRID-ORCS" id="6836">
    <property type="hits" value="51 hits in 1156 CRISPR screens"/>
</dbReference>
<dbReference type="ChiTaRS" id="SURF4">
    <property type="organism name" value="human"/>
</dbReference>
<dbReference type="GeneWiki" id="SURF4"/>
<dbReference type="GenomeRNAi" id="6836"/>
<dbReference type="Pharos" id="O15260">
    <property type="development level" value="Tbio"/>
</dbReference>
<dbReference type="PRO" id="PR:O15260"/>
<dbReference type="Proteomes" id="UP000005640">
    <property type="component" value="Chromosome 9"/>
</dbReference>
<dbReference type="RNAct" id="O15260">
    <property type="molecule type" value="protein"/>
</dbReference>
<dbReference type="Bgee" id="ENSG00000148248">
    <property type="expression patterns" value="Expressed in islet of Langerhans and 97 other cell types or tissues"/>
</dbReference>
<dbReference type="ExpressionAtlas" id="O15260">
    <property type="expression patterns" value="baseline and differential"/>
</dbReference>
<dbReference type="GO" id="GO:0035577">
    <property type="term" value="C:azurophil granule membrane"/>
    <property type="evidence" value="ECO:0000304"/>
    <property type="project" value="Reactome"/>
</dbReference>
<dbReference type="GO" id="GO:0030134">
    <property type="term" value="C:COPII-coated ER to Golgi transport vesicle"/>
    <property type="evidence" value="ECO:0000314"/>
    <property type="project" value="UniProtKB"/>
</dbReference>
<dbReference type="GO" id="GO:0005829">
    <property type="term" value="C:cytosol"/>
    <property type="evidence" value="ECO:0000314"/>
    <property type="project" value="HPA"/>
</dbReference>
<dbReference type="GO" id="GO:0005783">
    <property type="term" value="C:endoplasmic reticulum"/>
    <property type="evidence" value="ECO:0000314"/>
    <property type="project" value="HPA"/>
</dbReference>
<dbReference type="GO" id="GO:0070971">
    <property type="term" value="C:endoplasmic reticulum exit site"/>
    <property type="evidence" value="ECO:0000314"/>
    <property type="project" value="UniProtKB"/>
</dbReference>
<dbReference type="GO" id="GO:0005789">
    <property type="term" value="C:endoplasmic reticulum membrane"/>
    <property type="evidence" value="ECO:0000304"/>
    <property type="project" value="Reactome"/>
</dbReference>
<dbReference type="GO" id="GO:0005793">
    <property type="term" value="C:endoplasmic reticulum-Golgi intermediate compartment"/>
    <property type="evidence" value="ECO:0000314"/>
    <property type="project" value="UniProtKB"/>
</dbReference>
<dbReference type="GO" id="GO:0033116">
    <property type="term" value="C:endoplasmic reticulum-Golgi intermediate compartment membrane"/>
    <property type="evidence" value="ECO:0007669"/>
    <property type="project" value="UniProtKB-SubCell"/>
</dbReference>
<dbReference type="GO" id="GO:0005794">
    <property type="term" value="C:Golgi apparatus"/>
    <property type="evidence" value="ECO:0000314"/>
    <property type="project" value="HPA"/>
</dbReference>
<dbReference type="GO" id="GO:0000139">
    <property type="term" value="C:Golgi membrane"/>
    <property type="evidence" value="ECO:0000304"/>
    <property type="project" value="Reactome"/>
</dbReference>
<dbReference type="GO" id="GO:0031965">
    <property type="term" value="C:nuclear membrane"/>
    <property type="evidence" value="ECO:0000314"/>
    <property type="project" value="HPA"/>
</dbReference>
<dbReference type="GO" id="GO:0005886">
    <property type="term" value="C:plasma membrane"/>
    <property type="evidence" value="ECO:0000304"/>
    <property type="project" value="Reactome"/>
</dbReference>
<dbReference type="GO" id="GO:0030133">
    <property type="term" value="C:transport vesicle"/>
    <property type="evidence" value="ECO:0000304"/>
    <property type="project" value="Reactome"/>
</dbReference>
<dbReference type="GO" id="GO:0038024">
    <property type="term" value="F:cargo receptor activity"/>
    <property type="evidence" value="ECO:0000314"/>
    <property type="project" value="UniProtKB"/>
</dbReference>
<dbReference type="GO" id="GO:0097020">
    <property type="term" value="F:COPII receptor activity"/>
    <property type="evidence" value="ECO:0000314"/>
    <property type="project" value="UniProt"/>
</dbReference>
<dbReference type="GO" id="GO:0090110">
    <property type="term" value="P:COPII-coated vesicle cargo loading"/>
    <property type="evidence" value="ECO:0000250"/>
    <property type="project" value="UniProt"/>
</dbReference>
<dbReference type="GO" id="GO:0006888">
    <property type="term" value="P:endoplasmic reticulum to Golgi vesicle-mediated transport"/>
    <property type="evidence" value="ECO:0000250"/>
    <property type="project" value="UniProtKB"/>
</dbReference>
<dbReference type="GO" id="GO:0007030">
    <property type="term" value="P:Golgi organization"/>
    <property type="evidence" value="ECO:0000315"/>
    <property type="project" value="UniProtKB"/>
</dbReference>
<dbReference type="GO" id="GO:0140353">
    <property type="term" value="P:lipid export from cell"/>
    <property type="evidence" value="ECO:0007669"/>
    <property type="project" value="Ensembl"/>
</dbReference>
<dbReference type="GO" id="GO:0055088">
    <property type="term" value="P:lipid homeostasis"/>
    <property type="evidence" value="ECO:0000314"/>
    <property type="project" value="UniProtKB"/>
</dbReference>
<dbReference type="GO" id="GO:0042953">
    <property type="term" value="P:lipoprotein transport"/>
    <property type="evidence" value="ECO:0000314"/>
    <property type="project" value="UniProtKB"/>
</dbReference>
<dbReference type="GO" id="GO:0010638">
    <property type="term" value="P:positive regulation of organelle organization"/>
    <property type="evidence" value="ECO:0000315"/>
    <property type="project" value="UniProtKB"/>
</dbReference>
<dbReference type="GO" id="GO:0032368">
    <property type="term" value="P:regulation of lipid transport"/>
    <property type="evidence" value="ECO:0000314"/>
    <property type="project" value="UniProtKB"/>
</dbReference>
<dbReference type="InterPro" id="IPR045214">
    <property type="entry name" value="Surf1/Surf4"/>
</dbReference>
<dbReference type="InterPro" id="IPR002995">
    <property type="entry name" value="Surf4"/>
</dbReference>
<dbReference type="PANTHER" id="PTHR23427">
    <property type="entry name" value="SURFEIT LOCUS PROTEIN"/>
    <property type="match status" value="1"/>
</dbReference>
<dbReference type="PANTHER" id="PTHR23427:SF13">
    <property type="entry name" value="SURFEIT LOCUS PROTEIN 4"/>
    <property type="match status" value="1"/>
</dbReference>
<dbReference type="Pfam" id="PF02077">
    <property type="entry name" value="SURF4"/>
    <property type="match status" value="1"/>
</dbReference>
<dbReference type="PROSITE" id="PS01339">
    <property type="entry name" value="SURF4"/>
    <property type="match status" value="1"/>
</dbReference>
<sequence length="269" mass="30394">MGQNDLMGTAEDFADQFLRVTKQYLPHVARLCLISTFLEDGIRMWFQWSEQRDYIDTTWNCGYLLASSFVFLNLLGQLTGCVLVLSRNFVQYACFGLFGIIALQTIAYSILWDLKFLMRNLALGGGLLLLLAESRSEGKSMFAGVPTMRESSPKQYMQLGGRVLLVLMFMTLLHFDASFFSIVQNIVGTALMILVAIGFKTKLAALTLVVWLFAINVYFNAFWTIPVYKPMHDFLKYDFFQTMSVIGGLLLVVALGPGGVSMDEKKKEW</sequence>
<reference key="1">
    <citation type="journal article" date="2000" name="Proc. Natl. Acad. Sci. U.S.A.">
        <title>Gene expression profiling in the human hypothalamus-pituitary-adrenal axis and full-length cDNA cloning.</title>
        <authorList>
            <person name="Hu R.-M."/>
            <person name="Han Z.-G."/>
            <person name="Song H.-D."/>
            <person name="Peng Y.-D."/>
            <person name="Huang Q.-H."/>
            <person name="Ren S.-X."/>
            <person name="Gu Y.-J."/>
            <person name="Huang C.-H."/>
            <person name="Li Y.-B."/>
            <person name="Jiang C.-L."/>
            <person name="Fu G."/>
            <person name="Zhang Q.-H."/>
            <person name="Gu B.-W."/>
            <person name="Dai M."/>
            <person name="Mao Y.-F."/>
            <person name="Gao G.-F."/>
            <person name="Rong R."/>
            <person name="Ye M."/>
            <person name="Zhou J."/>
            <person name="Xu S.-H."/>
            <person name="Gu J."/>
            <person name="Shi J.-X."/>
            <person name="Jin W.-R."/>
            <person name="Zhang C.-K."/>
            <person name="Wu T.-M."/>
            <person name="Huang G.-Y."/>
            <person name="Chen Z."/>
            <person name="Chen M.-D."/>
            <person name="Chen J.-L."/>
        </authorList>
    </citation>
    <scope>NUCLEOTIDE SEQUENCE [LARGE SCALE MRNA] (ISOFORMS 1 AND 2)</scope>
    <source>
        <tissue>Pituitary</tissue>
    </source>
</reference>
<reference key="2">
    <citation type="journal article" date="2004" name="Nat. Genet.">
        <title>Complete sequencing and characterization of 21,243 full-length human cDNAs.</title>
        <authorList>
            <person name="Ota T."/>
            <person name="Suzuki Y."/>
            <person name="Nishikawa T."/>
            <person name="Otsuki T."/>
            <person name="Sugiyama T."/>
            <person name="Irie R."/>
            <person name="Wakamatsu A."/>
            <person name="Hayashi K."/>
            <person name="Sato H."/>
            <person name="Nagai K."/>
            <person name="Kimura K."/>
            <person name="Makita H."/>
            <person name="Sekine M."/>
            <person name="Obayashi M."/>
            <person name="Nishi T."/>
            <person name="Shibahara T."/>
            <person name="Tanaka T."/>
            <person name="Ishii S."/>
            <person name="Yamamoto J."/>
            <person name="Saito K."/>
            <person name="Kawai Y."/>
            <person name="Isono Y."/>
            <person name="Nakamura Y."/>
            <person name="Nagahari K."/>
            <person name="Murakami K."/>
            <person name="Yasuda T."/>
            <person name="Iwayanagi T."/>
            <person name="Wagatsuma M."/>
            <person name="Shiratori A."/>
            <person name="Sudo H."/>
            <person name="Hosoiri T."/>
            <person name="Kaku Y."/>
            <person name="Kodaira H."/>
            <person name="Kondo H."/>
            <person name="Sugawara M."/>
            <person name="Takahashi M."/>
            <person name="Kanda K."/>
            <person name="Yokoi T."/>
            <person name="Furuya T."/>
            <person name="Kikkawa E."/>
            <person name="Omura Y."/>
            <person name="Abe K."/>
            <person name="Kamihara K."/>
            <person name="Katsuta N."/>
            <person name="Sato K."/>
            <person name="Tanikawa M."/>
            <person name="Yamazaki M."/>
            <person name="Ninomiya K."/>
            <person name="Ishibashi T."/>
            <person name="Yamashita H."/>
            <person name="Murakawa K."/>
            <person name="Fujimori K."/>
            <person name="Tanai H."/>
            <person name="Kimata M."/>
            <person name="Watanabe M."/>
            <person name="Hiraoka S."/>
            <person name="Chiba Y."/>
            <person name="Ishida S."/>
            <person name="Ono Y."/>
            <person name="Takiguchi S."/>
            <person name="Watanabe S."/>
            <person name="Yosida M."/>
            <person name="Hotuta T."/>
            <person name="Kusano J."/>
            <person name="Kanehori K."/>
            <person name="Takahashi-Fujii A."/>
            <person name="Hara H."/>
            <person name="Tanase T.-O."/>
            <person name="Nomura Y."/>
            <person name="Togiya S."/>
            <person name="Komai F."/>
            <person name="Hara R."/>
            <person name="Takeuchi K."/>
            <person name="Arita M."/>
            <person name="Imose N."/>
            <person name="Musashino K."/>
            <person name="Yuuki H."/>
            <person name="Oshima A."/>
            <person name="Sasaki N."/>
            <person name="Aotsuka S."/>
            <person name="Yoshikawa Y."/>
            <person name="Matsunawa H."/>
            <person name="Ichihara T."/>
            <person name="Shiohata N."/>
            <person name="Sano S."/>
            <person name="Moriya S."/>
            <person name="Momiyama H."/>
            <person name="Satoh N."/>
            <person name="Takami S."/>
            <person name="Terashima Y."/>
            <person name="Suzuki O."/>
            <person name="Nakagawa S."/>
            <person name="Senoh A."/>
            <person name="Mizoguchi H."/>
            <person name="Goto Y."/>
            <person name="Shimizu F."/>
            <person name="Wakebe H."/>
            <person name="Hishigaki H."/>
            <person name="Watanabe T."/>
            <person name="Sugiyama A."/>
            <person name="Takemoto M."/>
            <person name="Kawakami B."/>
            <person name="Yamazaki M."/>
            <person name="Watanabe K."/>
            <person name="Kumagai A."/>
            <person name="Itakura S."/>
            <person name="Fukuzumi Y."/>
            <person name="Fujimori Y."/>
            <person name="Komiyama M."/>
            <person name="Tashiro H."/>
            <person name="Tanigami A."/>
            <person name="Fujiwara T."/>
            <person name="Ono T."/>
            <person name="Yamada K."/>
            <person name="Fujii Y."/>
            <person name="Ozaki K."/>
            <person name="Hirao M."/>
            <person name="Ohmori Y."/>
            <person name="Kawabata A."/>
            <person name="Hikiji T."/>
            <person name="Kobatake N."/>
            <person name="Inagaki H."/>
            <person name="Ikema Y."/>
            <person name="Okamoto S."/>
            <person name="Okitani R."/>
            <person name="Kawakami T."/>
            <person name="Noguchi S."/>
            <person name="Itoh T."/>
            <person name="Shigeta K."/>
            <person name="Senba T."/>
            <person name="Matsumura K."/>
            <person name="Nakajima Y."/>
            <person name="Mizuno T."/>
            <person name="Morinaga M."/>
            <person name="Sasaki M."/>
            <person name="Togashi T."/>
            <person name="Oyama M."/>
            <person name="Hata H."/>
            <person name="Watanabe M."/>
            <person name="Komatsu T."/>
            <person name="Mizushima-Sugano J."/>
            <person name="Satoh T."/>
            <person name="Shirai Y."/>
            <person name="Takahashi Y."/>
            <person name="Nakagawa K."/>
            <person name="Okumura K."/>
            <person name="Nagase T."/>
            <person name="Nomura N."/>
            <person name="Kikuchi H."/>
            <person name="Masuho Y."/>
            <person name="Yamashita R."/>
            <person name="Nakai K."/>
            <person name="Yada T."/>
            <person name="Nakamura Y."/>
            <person name="Ohara O."/>
            <person name="Isogai T."/>
            <person name="Sugano S."/>
        </authorList>
    </citation>
    <scope>NUCLEOTIDE SEQUENCE [LARGE SCALE MRNA] (ISOFORMS 1 AND 3)</scope>
</reference>
<reference key="3">
    <citation type="journal article" date="2004" name="Nature">
        <title>DNA sequence and analysis of human chromosome 9.</title>
        <authorList>
            <person name="Humphray S.J."/>
            <person name="Oliver K."/>
            <person name="Hunt A.R."/>
            <person name="Plumb R.W."/>
            <person name="Loveland J.E."/>
            <person name="Howe K.L."/>
            <person name="Andrews T.D."/>
            <person name="Searle S."/>
            <person name="Hunt S.E."/>
            <person name="Scott C.E."/>
            <person name="Jones M.C."/>
            <person name="Ainscough R."/>
            <person name="Almeida J.P."/>
            <person name="Ambrose K.D."/>
            <person name="Ashwell R.I.S."/>
            <person name="Babbage A.K."/>
            <person name="Babbage S."/>
            <person name="Bagguley C.L."/>
            <person name="Bailey J."/>
            <person name="Banerjee R."/>
            <person name="Barker D.J."/>
            <person name="Barlow K.F."/>
            <person name="Bates K."/>
            <person name="Beasley H."/>
            <person name="Beasley O."/>
            <person name="Bird C.P."/>
            <person name="Bray-Allen S."/>
            <person name="Brown A.J."/>
            <person name="Brown J.Y."/>
            <person name="Burford D."/>
            <person name="Burrill W."/>
            <person name="Burton J."/>
            <person name="Carder C."/>
            <person name="Carter N.P."/>
            <person name="Chapman J.C."/>
            <person name="Chen Y."/>
            <person name="Clarke G."/>
            <person name="Clark S.Y."/>
            <person name="Clee C.M."/>
            <person name="Clegg S."/>
            <person name="Collier R.E."/>
            <person name="Corby N."/>
            <person name="Crosier M."/>
            <person name="Cummings A.T."/>
            <person name="Davies J."/>
            <person name="Dhami P."/>
            <person name="Dunn M."/>
            <person name="Dutta I."/>
            <person name="Dyer L.W."/>
            <person name="Earthrowl M.E."/>
            <person name="Faulkner L."/>
            <person name="Fleming C.J."/>
            <person name="Frankish A."/>
            <person name="Frankland J.A."/>
            <person name="French L."/>
            <person name="Fricker D.G."/>
            <person name="Garner P."/>
            <person name="Garnett J."/>
            <person name="Ghori J."/>
            <person name="Gilbert J.G.R."/>
            <person name="Glison C."/>
            <person name="Grafham D.V."/>
            <person name="Gribble S."/>
            <person name="Griffiths C."/>
            <person name="Griffiths-Jones S."/>
            <person name="Grocock R."/>
            <person name="Guy J."/>
            <person name="Hall R.E."/>
            <person name="Hammond S."/>
            <person name="Harley J.L."/>
            <person name="Harrison E.S.I."/>
            <person name="Hart E.A."/>
            <person name="Heath P.D."/>
            <person name="Henderson C.D."/>
            <person name="Hopkins B.L."/>
            <person name="Howard P.J."/>
            <person name="Howden P.J."/>
            <person name="Huckle E."/>
            <person name="Johnson C."/>
            <person name="Johnson D."/>
            <person name="Joy A.A."/>
            <person name="Kay M."/>
            <person name="Keenan S."/>
            <person name="Kershaw J.K."/>
            <person name="Kimberley A.M."/>
            <person name="King A."/>
            <person name="Knights A."/>
            <person name="Laird G.K."/>
            <person name="Langford C."/>
            <person name="Lawlor S."/>
            <person name="Leongamornlert D.A."/>
            <person name="Leversha M."/>
            <person name="Lloyd C."/>
            <person name="Lloyd D.M."/>
            <person name="Lovell J."/>
            <person name="Martin S."/>
            <person name="Mashreghi-Mohammadi M."/>
            <person name="Matthews L."/>
            <person name="McLaren S."/>
            <person name="McLay K.E."/>
            <person name="McMurray A."/>
            <person name="Milne S."/>
            <person name="Nickerson T."/>
            <person name="Nisbett J."/>
            <person name="Nordsiek G."/>
            <person name="Pearce A.V."/>
            <person name="Peck A.I."/>
            <person name="Porter K.M."/>
            <person name="Pandian R."/>
            <person name="Pelan S."/>
            <person name="Phillimore B."/>
            <person name="Povey S."/>
            <person name="Ramsey Y."/>
            <person name="Rand V."/>
            <person name="Scharfe M."/>
            <person name="Sehra H.K."/>
            <person name="Shownkeen R."/>
            <person name="Sims S.K."/>
            <person name="Skuce C.D."/>
            <person name="Smith M."/>
            <person name="Steward C.A."/>
            <person name="Swarbreck D."/>
            <person name="Sycamore N."/>
            <person name="Tester J."/>
            <person name="Thorpe A."/>
            <person name="Tracey A."/>
            <person name="Tromans A."/>
            <person name="Thomas D.W."/>
            <person name="Wall M."/>
            <person name="Wallis J.M."/>
            <person name="West A.P."/>
            <person name="Whitehead S.L."/>
            <person name="Willey D.L."/>
            <person name="Williams S.A."/>
            <person name="Wilming L."/>
            <person name="Wray P.W."/>
            <person name="Young L."/>
            <person name="Ashurst J.L."/>
            <person name="Coulson A."/>
            <person name="Blocker H."/>
            <person name="Durbin R.M."/>
            <person name="Sulston J.E."/>
            <person name="Hubbard T."/>
            <person name="Jackson M.J."/>
            <person name="Bentley D.R."/>
            <person name="Beck S."/>
            <person name="Rogers J."/>
            <person name="Dunham I."/>
        </authorList>
    </citation>
    <scope>NUCLEOTIDE SEQUENCE [LARGE SCALE GENOMIC DNA]</scope>
</reference>
<reference key="4">
    <citation type="submission" date="2005-07" db="EMBL/GenBank/DDBJ databases">
        <authorList>
            <person name="Mural R.J."/>
            <person name="Istrail S."/>
            <person name="Sutton G.G."/>
            <person name="Florea L."/>
            <person name="Halpern A.L."/>
            <person name="Mobarry C.M."/>
            <person name="Lippert R."/>
            <person name="Walenz B."/>
            <person name="Shatkay H."/>
            <person name="Dew I."/>
            <person name="Miller J.R."/>
            <person name="Flanigan M.J."/>
            <person name="Edwards N.J."/>
            <person name="Bolanos R."/>
            <person name="Fasulo D."/>
            <person name="Halldorsson B.V."/>
            <person name="Hannenhalli S."/>
            <person name="Turner R."/>
            <person name="Yooseph S."/>
            <person name="Lu F."/>
            <person name="Nusskern D.R."/>
            <person name="Shue B.C."/>
            <person name="Zheng X.H."/>
            <person name="Zhong F."/>
            <person name="Delcher A.L."/>
            <person name="Huson D.H."/>
            <person name="Kravitz S.A."/>
            <person name="Mouchard L."/>
            <person name="Reinert K."/>
            <person name="Remington K.A."/>
            <person name="Clark A.G."/>
            <person name="Waterman M.S."/>
            <person name="Eichler E.E."/>
            <person name="Adams M.D."/>
            <person name="Hunkapiller M.W."/>
            <person name="Myers E.W."/>
            <person name="Venter J.C."/>
        </authorList>
    </citation>
    <scope>NUCLEOTIDE SEQUENCE [LARGE SCALE GENOMIC DNA]</scope>
</reference>
<reference key="5">
    <citation type="journal article" date="2004" name="Genome Res.">
        <title>The status, quality, and expansion of the NIH full-length cDNA project: the Mammalian Gene Collection (MGC).</title>
        <authorList>
            <consortium name="The MGC Project Team"/>
        </authorList>
    </citation>
    <scope>NUCLEOTIDE SEQUENCE [LARGE SCALE MRNA] (ISOFORM 1)</scope>
    <source>
        <tissue>Lung</tissue>
    </source>
</reference>
<reference key="6">
    <citation type="journal article" date="1995" name="Mol. Membr. Biol.">
        <title>The surf-4 gene encodes a novel 30 kDa integral membrane protein.</title>
        <authorList>
            <person name="Reeves J.E."/>
            <person name="Fried M."/>
        </authorList>
    </citation>
    <scope>NUCLEOTIDE SEQUENCE [MRNA] OF 8-261</scope>
</reference>
<reference key="7">
    <citation type="journal article" date="1998" name="Genomics">
        <title>The human Surfeit locus.</title>
        <authorList>
            <person name="Duhig T."/>
            <person name="Ruhrberg C."/>
            <person name="Mor O."/>
            <person name="Fried M."/>
        </authorList>
    </citation>
    <scope>NUCLEOTIDE SEQUENCE [GENOMIC DNA] OF 258-269</scope>
</reference>
<reference key="8">
    <citation type="journal article" date="2004" name="J. Biol. Chem.">
        <title>Proteomics of endoplasmic reticulum-Golgi intermediate compartment (ERGIC) membranes from brefeldin A-treated HepG2 cells identifies ERGIC-32, a new cycling protein that interacts with human Erv46.</title>
        <authorList>
            <person name="Breuza L."/>
            <person name="Halbeisen R."/>
            <person name="Jenoe P."/>
            <person name="Otte S."/>
            <person name="Barlowe C."/>
            <person name="Hong W."/>
            <person name="Hauri H.-P."/>
        </authorList>
    </citation>
    <scope>IDENTIFICATION BY MASS SPECTROMETRY</scope>
    <scope>SUBCELLULAR LOCATION</scope>
</reference>
<reference key="9">
    <citation type="journal article" date="2008" name="Mol. Biol. Cell">
        <title>The cargo receptors Surf4, endoplasmic reticulum-Golgi intermediate compartment (ERGIC)-53, and p25 are required to maintain the architecture of ERGIC and Golgi.</title>
        <authorList>
            <person name="Mitrovic S."/>
            <person name="Ben-Tekaya H."/>
            <person name="Koegler E."/>
            <person name="Gruenberg J."/>
            <person name="Hauri H.-P."/>
        </authorList>
    </citation>
    <scope>FUNCTION</scope>
    <scope>IDENTIFICATION IN A COMPLEX WITH TMED2 AND TMED10</scope>
    <scope>INTERACTION WITH LMAN1</scope>
    <scope>SUBCELLULAR LOCATION</scope>
    <scope>MUTAGENESIS OF 265-LYS--LYS-267</scope>
    <scope>DI-LYSINE MOTIF</scope>
</reference>
<reference key="10">
    <citation type="journal article" date="2011" name="BMC Syst. Biol.">
        <title>Initial characterization of the human central proteome.</title>
        <authorList>
            <person name="Burkard T.R."/>
            <person name="Planyavsky M."/>
            <person name="Kaupe I."/>
            <person name="Breitwieser F.P."/>
            <person name="Buerckstuemmer T."/>
            <person name="Bennett K.L."/>
            <person name="Superti-Furga G."/>
            <person name="Colinge J."/>
        </authorList>
    </citation>
    <scope>IDENTIFICATION BY MASS SPECTROMETRY [LARGE SCALE ANALYSIS]</scope>
</reference>
<reference key="11">
    <citation type="journal article" date="2012" name="Proc. Natl. Acad. Sci. U.S.A.">
        <title>N-terminal acetylome analyses and functional insights of the N-terminal acetyltransferase NatB.</title>
        <authorList>
            <person name="Van Damme P."/>
            <person name="Lasa M."/>
            <person name="Polevoda B."/>
            <person name="Gazquez C."/>
            <person name="Elosegui-Artola A."/>
            <person name="Kim D.S."/>
            <person name="De Juan-Pardo E."/>
            <person name="Demeyer K."/>
            <person name="Hole K."/>
            <person name="Larrea E."/>
            <person name="Timmerman E."/>
            <person name="Prieto J."/>
            <person name="Arnesen T."/>
            <person name="Sherman F."/>
            <person name="Gevaert K."/>
            <person name="Aldabe R."/>
        </authorList>
    </citation>
    <scope>IDENTIFICATION BY MASS SPECTROMETRY [LARGE SCALE ANALYSIS]</scope>
</reference>
<reference key="12">
    <citation type="journal article" date="2015" name="Proteomics">
        <title>N-terminome analysis of the human mitochondrial proteome.</title>
        <authorList>
            <person name="Vaca Jacome A.S."/>
            <person name="Rabilloud T."/>
            <person name="Schaeffer-Reiss C."/>
            <person name="Rompais M."/>
            <person name="Ayoub D."/>
            <person name="Lane L."/>
            <person name="Bairoch A."/>
            <person name="Van Dorsselaer A."/>
            <person name="Carapito C."/>
        </authorList>
    </citation>
    <scope>CLEAVAGE OF INITIATOR METHIONINE [LARGE SCALE ANALYSIS]</scope>
    <scope>IDENTIFICATION BY MASS SPECTROMETRY [LARGE SCALE ANALYSIS]</scope>
</reference>
<reference key="13">
    <citation type="journal article" date="2018" name="Elife">
        <title>The cargo receptor SURF4 promotes the efficient cellular secretion of PCSK9.</title>
        <authorList>
            <person name="Emmer B.T."/>
            <person name="Hesketh G.G."/>
            <person name="Kotnik E."/>
            <person name="Tang V.T."/>
            <person name="Lascuna P.J."/>
            <person name="Xiang J."/>
            <person name="Gingras A.C."/>
            <person name="Chen X.W."/>
            <person name="Ginsburg D."/>
        </authorList>
    </citation>
    <scope>FUNCTION</scope>
    <scope>SUBCELLULAR LOCATION</scope>
</reference>
<reference key="14">
    <citation type="journal article" date="2018" name="J. Cell Biol.">
        <title>SFT-4/Surf4 control ER export of soluble cargo proteins and participate in ER exit site organization.</title>
        <authorList>
            <person name="Saegusa K."/>
            <person name="Sato M."/>
            <person name="Morooka N."/>
            <person name="Hara T."/>
            <person name="Sato K."/>
        </authorList>
    </citation>
    <scope>FUNCTION</scope>
</reference>
<reference key="15">
    <citation type="journal article" date="2018" name="Proteomics">
        <title>Quantitative Proteomics Identified TTC4 as a TBK1 Interactor and a Positive Regulator of SeV-Induced Innate Immunity.</title>
        <authorList>
            <person name="Shang J."/>
            <person name="Xia T."/>
            <person name="Han Q.Q."/>
            <person name="Zhao X."/>
            <person name="Hu M.M."/>
            <person name="Shu H.B."/>
            <person name="Guo L."/>
        </authorList>
    </citation>
    <scope>INTERACTION WITH STING1</scope>
</reference>
<reference key="16">
    <citation type="journal article" date="2020" name="Mol. Cell. Biol.">
        <title>The endoplasmic reticulum cargo receptor SURF4 facilitates efficient erythropoietin secretion.</title>
        <authorList>
            <person name="Lin Z."/>
            <person name="King R."/>
            <person name="Tang V."/>
            <person name="Myers G."/>
            <person name="Balbin-Cuesta G."/>
            <person name="Friedman A."/>
            <person name="McGee B."/>
            <person name="Desch K."/>
            <person name="Ozel A.B."/>
            <person name="Siemieniak D."/>
            <person name="Reddy P."/>
            <person name="Emmer B."/>
            <person name="Khoriaty R."/>
        </authorList>
    </citation>
    <scope>FUNCTION</scope>
</reference>
<reference key="17">
    <citation type="journal article" date="2021" name="Cell Metab.">
        <title>Receptor-mediated ER export of lipoproteins controls lipid homeostasis in mice and humans.</title>
        <authorList>
            <person name="Wang X."/>
            <person name="Wang H."/>
            <person name="Xu B."/>
            <person name="Huang D."/>
            <person name="Nie C."/>
            <person name="Pu L."/>
            <person name="Zajac G.J.M."/>
            <person name="Yan H."/>
            <person name="Zhao J."/>
            <person name="Shi F."/>
            <person name="Emmer B.T."/>
            <person name="Lu J."/>
            <person name="Wang R."/>
            <person name="Dong X."/>
            <person name="Dai J."/>
            <person name="Zhou W."/>
            <person name="Wang C."/>
            <person name="Gao G."/>
            <person name="Wang Y."/>
            <person name="Willer C."/>
            <person name="Lu X."/>
            <person name="Zhu Y."/>
            <person name="Chen X.W."/>
        </authorList>
    </citation>
    <scope>FUNCTION</scope>
    <scope>SUBCELLULAR LOCATION</scope>
    <scope>MUTAGENESIS OF 265-LYS--LYS-267</scope>
    <scope>DI-LYSINE MOTIF</scope>
    <scope>INTERACTION WITH SAR1B</scope>
</reference>
<reference key="18">
    <citation type="journal article" date="2021" name="Cell Metab.">
        <title>TMEM41B acts as an ER scramblase required for lipoprotein biogenesis and lipid homeostasis.</title>
        <authorList>
            <person name="Huang D."/>
            <person name="Xu B."/>
            <person name="Liu L."/>
            <person name="Wu L."/>
            <person name="Zhu Y."/>
            <person name="Ghanbarpour A."/>
            <person name="Wang Y."/>
            <person name="Chen F.J."/>
            <person name="Lyu J."/>
            <person name="Hu Y."/>
            <person name="Kang Y."/>
            <person name="Zhou W."/>
            <person name="Wang X."/>
            <person name="Ding W."/>
            <person name="Li X."/>
            <person name="Jiang Z."/>
            <person name="Chen J."/>
            <person name="Zhang X."/>
            <person name="Zhou H."/>
            <person name="Li J.Z."/>
            <person name="Guo C."/>
            <person name="Zheng W."/>
            <person name="Zhang X."/>
            <person name="Li P."/>
            <person name="Melia T."/>
            <person name="Reinisch K."/>
            <person name="Chen X.W."/>
        </authorList>
    </citation>
    <scope>INTERACTION WITH TMEM41B</scope>
</reference>